<accession>Q2UMY7</accession>
<organism>
    <name type="scientific">Aspergillus oryzae (strain ATCC 42149 / RIB 40)</name>
    <name type="common">Yellow koji mold</name>
    <dbReference type="NCBI Taxonomy" id="510516"/>
    <lineage>
        <taxon>Eukaryota</taxon>
        <taxon>Fungi</taxon>
        <taxon>Dikarya</taxon>
        <taxon>Ascomycota</taxon>
        <taxon>Pezizomycotina</taxon>
        <taxon>Eurotiomycetes</taxon>
        <taxon>Eurotiomycetidae</taxon>
        <taxon>Eurotiales</taxon>
        <taxon>Aspergillaceae</taxon>
        <taxon>Aspergillus</taxon>
        <taxon>Aspergillus subgen. Circumdati</taxon>
    </lineage>
</organism>
<dbReference type="EC" id="3.6.4.13"/>
<dbReference type="EMBL" id="BA000050">
    <property type="protein sequence ID" value="BAE57078.1"/>
    <property type="molecule type" value="Genomic_DNA"/>
</dbReference>
<dbReference type="SMR" id="Q2UMY7"/>
<dbReference type="STRING" id="510516.Q2UMY7"/>
<dbReference type="EnsemblFungi" id="BAE57078">
    <property type="protein sequence ID" value="BAE57078"/>
    <property type="gene ID" value="AO090001000569"/>
</dbReference>
<dbReference type="HOGENOM" id="CLU_003041_13_0_1"/>
<dbReference type="OMA" id="QMIQKAR"/>
<dbReference type="Proteomes" id="UP000006564">
    <property type="component" value="Chromosome 2"/>
</dbReference>
<dbReference type="GO" id="GO:0005730">
    <property type="term" value="C:nucleolus"/>
    <property type="evidence" value="ECO:0007669"/>
    <property type="project" value="UniProtKB-SubCell"/>
</dbReference>
<dbReference type="GO" id="GO:0005524">
    <property type="term" value="F:ATP binding"/>
    <property type="evidence" value="ECO:0007669"/>
    <property type="project" value="UniProtKB-KW"/>
</dbReference>
<dbReference type="GO" id="GO:0016887">
    <property type="term" value="F:ATP hydrolysis activity"/>
    <property type="evidence" value="ECO:0007669"/>
    <property type="project" value="RHEA"/>
</dbReference>
<dbReference type="GO" id="GO:0003723">
    <property type="term" value="F:RNA binding"/>
    <property type="evidence" value="ECO:0007669"/>
    <property type="project" value="UniProtKB-KW"/>
</dbReference>
<dbReference type="GO" id="GO:0003724">
    <property type="term" value="F:RNA helicase activity"/>
    <property type="evidence" value="ECO:0007669"/>
    <property type="project" value="UniProtKB-EC"/>
</dbReference>
<dbReference type="GO" id="GO:0006364">
    <property type="term" value="P:rRNA processing"/>
    <property type="evidence" value="ECO:0007669"/>
    <property type="project" value="UniProtKB-KW"/>
</dbReference>
<dbReference type="CDD" id="cd18787">
    <property type="entry name" value="SF2_C_DEAD"/>
    <property type="match status" value="1"/>
</dbReference>
<dbReference type="Gene3D" id="3.40.50.300">
    <property type="entry name" value="P-loop containing nucleotide triphosphate hydrolases"/>
    <property type="match status" value="2"/>
</dbReference>
<dbReference type="InterPro" id="IPR011545">
    <property type="entry name" value="DEAD/DEAH_box_helicase_dom"/>
</dbReference>
<dbReference type="InterPro" id="IPR014001">
    <property type="entry name" value="Helicase_ATP-bd"/>
</dbReference>
<dbReference type="InterPro" id="IPR001650">
    <property type="entry name" value="Helicase_C-like"/>
</dbReference>
<dbReference type="InterPro" id="IPR027417">
    <property type="entry name" value="P-loop_NTPase"/>
</dbReference>
<dbReference type="InterPro" id="IPR000629">
    <property type="entry name" value="RNA-helicase_DEAD-box_CS"/>
</dbReference>
<dbReference type="InterPro" id="IPR014014">
    <property type="entry name" value="RNA_helicase_DEAD_Q_motif"/>
</dbReference>
<dbReference type="PANTHER" id="PTHR24031">
    <property type="entry name" value="RNA HELICASE"/>
    <property type="match status" value="1"/>
</dbReference>
<dbReference type="Pfam" id="PF00270">
    <property type="entry name" value="DEAD"/>
    <property type="match status" value="1"/>
</dbReference>
<dbReference type="Pfam" id="PF00271">
    <property type="entry name" value="Helicase_C"/>
    <property type="match status" value="1"/>
</dbReference>
<dbReference type="SMART" id="SM00487">
    <property type="entry name" value="DEXDc"/>
    <property type="match status" value="1"/>
</dbReference>
<dbReference type="SMART" id="SM00490">
    <property type="entry name" value="HELICc"/>
    <property type="match status" value="1"/>
</dbReference>
<dbReference type="SUPFAM" id="SSF52540">
    <property type="entry name" value="P-loop containing nucleoside triphosphate hydrolases"/>
    <property type="match status" value="1"/>
</dbReference>
<dbReference type="PROSITE" id="PS00039">
    <property type="entry name" value="DEAD_ATP_HELICASE"/>
    <property type="match status" value="1"/>
</dbReference>
<dbReference type="PROSITE" id="PS51192">
    <property type="entry name" value="HELICASE_ATP_BIND_1"/>
    <property type="match status" value="1"/>
</dbReference>
<dbReference type="PROSITE" id="PS51194">
    <property type="entry name" value="HELICASE_CTER"/>
    <property type="match status" value="1"/>
</dbReference>
<dbReference type="PROSITE" id="PS51195">
    <property type="entry name" value="Q_MOTIF"/>
    <property type="match status" value="1"/>
</dbReference>
<name>MAK5_ASPOR</name>
<reference key="1">
    <citation type="journal article" date="2005" name="Nature">
        <title>Genome sequencing and analysis of Aspergillus oryzae.</title>
        <authorList>
            <person name="Machida M."/>
            <person name="Asai K."/>
            <person name="Sano M."/>
            <person name="Tanaka T."/>
            <person name="Kumagai T."/>
            <person name="Terai G."/>
            <person name="Kusumoto K."/>
            <person name="Arima T."/>
            <person name="Akita O."/>
            <person name="Kashiwagi Y."/>
            <person name="Abe K."/>
            <person name="Gomi K."/>
            <person name="Horiuchi H."/>
            <person name="Kitamoto K."/>
            <person name="Kobayashi T."/>
            <person name="Takeuchi M."/>
            <person name="Denning D.W."/>
            <person name="Galagan J.E."/>
            <person name="Nierman W.C."/>
            <person name="Yu J."/>
            <person name="Archer D.B."/>
            <person name="Bennett J.W."/>
            <person name="Bhatnagar D."/>
            <person name="Cleveland T.E."/>
            <person name="Fedorova N.D."/>
            <person name="Gotoh O."/>
            <person name="Horikawa H."/>
            <person name="Hosoyama A."/>
            <person name="Ichinomiya M."/>
            <person name="Igarashi R."/>
            <person name="Iwashita K."/>
            <person name="Juvvadi P.R."/>
            <person name="Kato M."/>
            <person name="Kato Y."/>
            <person name="Kin T."/>
            <person name="Kokubun A."/>
            <person name="Maeda H."/>
            <person name="Maeyama N."/>
            <person name="Maruyama J."/>
            <person name="Nagasaki H."/>
            <person name="Nakajima T."/>
            <person name="Oda K."/>
            <person name="Okada K."/>
            <person name="Paulsen I."/>
            <person name="Sakamoto K."/>
            <person name="Sawano T."/>
            <person name="Takahashi M."/>
            <person name="Takase K."/>
            <person name="Terabayashi Y."/>
            <person name="Wortman J.R."/>
            <person name="Yamada O."/>
            <person name="Yamagata Y."/>
            <person name="Anazawa H."/>
            <person name="Hata Y."/>
            <person name="Koide Y."/>
            <person name="Komori T."/>
            <person name="Koyama Y."/>
            <person name="Minetoki T."/>
            <person name="Suharnan S."/>
            <person name="Tanaka A."/>
            <person name="Isono K."/>
            <person name="Kuhara S."/>
            <person name="Ogasawara N."/>
            <person name="Kikuchi H."/>
        </authorList>
    </citation>
    <scope>NUCLEOTIDE SEQUENCE [LARGE SCALE GENOMIC DNA]</scope>
    <source>
        <strain>ATCC 42149 / RIB 40</strain>
    </source>
</reference>
<keyword id="KW-0067">ATP-binding</keyword>
<keyword id="KW-0347">Helicase</keyword>
<keyword id="KW-0378">Hydrolase</keyword>
<keyword id="KW-0547">Nucleotide-binding</keyword>
<keyword id="KW-0539">Nucleus</keyword>
<keyword id="KW-1185">Reference proteome</keyword>
<keyword id="KW-0690">Ribosome biogenesis</keyword>
<keyword id="KW-0694">RNA-binding</keyword>
<keyword id="KW-0698">rRNA processing</keyword>
<comment type="function">
    <text evidence="1">ATP-binding RNA helicase involved in the biogenesis of 60S ribosomal subunits and is required for the normal formation of 25S and 5.8S rRNAs.</text>
</comment>
<comment type="catalytic activity">
    <reaction>
        <text>ATP + H2O = ADP + phosphate + H(+)</text>
        <dbReference type="Rhea" id="RHEA:13065"/>
        <dbReference type="ChEBI" id="CHEBI:15377"/>
        <dbReference type="ChEBI" id="CHEBI:15378"/>
        <dbReference type="ChEBI" id="CHEBI:30616"/>
        <dbReference type="ChEBI" id="CHEBI:43474"/>
        <dbReference type="ChEBI" id="CHEBI:456216"/>
        <dbReference type="EC" id="3.6.4.13"/>
    </reaction>
</comment>
<comment type="subcellular location">
    <subcellularLocation>
        <location evidence="1">Nucleus</location>
        <location evidence="1">Nucleolus</location>
    </subcellularLocation>
</comment>
<comment type="domain">
    <text>The Q motif is unique to and characteristic of the DEAD box family of RNA helicases and controls ATP binding and hydrolysis.</text>
</comment>
<comment type="similarity">
    <text evidence="5">Belongs to the DEAD box helicase family. DDX24/MAK5 subfamily.</text>
</comment>
<evidence type="ECO:0000250" key="1"/>
<evidence type="ECO:0000255" key="2">
    <source>
        <dbReference type="PROSITE-ProRule" id="PRU00541"/>
    </source>
</evidence>
<evidence type="ECO:0000255" key="3">
    <source>
        <dbReference type="PROSITE-ProRule" id="PRU00542"/>
    </source>
</evidence>
<evidence type="ECO:0000256" key="4">
    <source>
        <dbReference type="SAM" id="MobiDB-lite"/>
    </source>
</evidence>
<evidence type="ECO:0000305" key="5"/>
<sequence length="757" mass="83520">MGQKRQRDQKGPGSFAKKRKKSAKPSDATAEDSDWDGIVGMNELNWKEVALPDRLEDAGGFFGLEEIEGVDIIRSEGNGEIKFKKKEPEETNTQSDDEWEGFGDDDQAVSQEESKETQDEPNESDKKAKVKESKNAKKEKKKNAKDARKEQKEKAVESKEDKGIKSGLSFAALQEEEDDGADVSAWESLGLSPEILAGISKMKFTTPTSVQKACIPPILDGRDVIGKASTGSGKTLAFGIPILEYYLEKLRSKTQKDSEKTETTPIALVLSPTRELAHQLAKHIGEVVSHAPGVNARIALLTGGLSLQKQQRVLTNADIVIGTPGRVWEVLSSGHGLIRKMQAIKFLVIDEADRLLSEGHFKEAHEILAALDRVVDGEFPDESSDESDDELDPKSGRQTLVFSATFHRDLQQKLAGKGKWTGGDIMSQKESMEYLLQKLNFREEKPRFIDVNPVSQMAENLKEGIVECAAMEKDLFLYTLLLYHPKHRTLVFTNSISAVRRLTQLLQTLQLPALALHSSMAQKARLRSVERFSSPSSDPSSILVATDVAARGLDIKGIDFVVHYHAPRTADAYVHRSGRTARAGASGKSVIICSPDEMVGVVRLAAKVHANMANRKKVPLESLELDRRVVSRVKQRVTLAARIVDSNIAKEKVSSEDNWLRTAAEDLGVDYDSEEFDNAAARGRGRGRGRQERERKAGSTSKGELAGMRAELKQLLSQRVNVGVSERYLTSGRVDIEALLRGEGNNSFLGQVDPLDF</sequence>
<gene>
    <name type="primary">mak5</name>
    <name type="ORF">AO090001000569</name>
</gene>
<proteinExistence type="inferred from homology"/>
<protein>
    <recommendedName>
        <fullName>ATP-dependent RNA helicase mak5</fullName>
        <ecNumber>3.6.4.13</ecNumber>
    </recommendedName>
</protein>
<feature type="chain" id="PRO_0000232230" description="ATP-dependent RNA helicase mak5">
    <location>
        <begin position="1"/>
        <end position="757"/>
    </location>
</feature>
<feature type="domain" description="Helicase ATP-binding" evidence="2">
    <location>
        <begin position="215"/>
        <end position="424"/>
    </location>
</feature>
<feature type="domain" description="Helicase C-terminal" evidence="3">
    <location>
        <begin position="460"/>
        <end position="626"/>
    </location>
</feature>
<feature type="region of interest" description="Disordered" evidence="4">
    <location>
        <begin position="1"/>
        <end position="38"/>
    </location>
</feature>
<feature type="region of interest" description="Disordered" evidence="4">
    <location>
        <begin position="66"/>
        <end position="161"/>
    </location>
</feature>
<feature type="region of interest" description="Disordered" evidence="4">
    <location>
        <begin position="678"/>
        <end position="704"/>
    </location>
</feature>
<feature type="short sequence motif" description="Q motif">
    <location>
        <begin position="184"/>
        <end position="212"/>
    </location>
</feature>
<feature type="short sequence motif" description="DEAD box">
    <location>
        <begin position="350"/>
        <end position="353"/>
    </location>
</feature>
<feature type="compositionally biased region" description="Basic and acidic residues" evidence="4">
    <location>
        <begin position="1"/>
        <end position="10"/>
    </location>
</feature>
<feature type="compositionally biased region" description="Basic and acidic residues" evidence="4">
    <location>
        <begin position="71"/>
        <end position="89"/>
    </location>
</feature>
<feature type="compositionally biased region" description="Acidic residues" evidence="4">
    <location>
        <begin position="95"/>
        <end position="107"/>
    </location>
</feature>
<feature type="compositionally biased region" description="Basic and acidic residues" evidence="4">
    <location>
        <begin position="112"/>
        <end position="136"/>
    </location>
</feature>
<feature type="compositionally biased region" description="Basic and acidic residues" evidence="4">
    <location>
        <begin position="144"/>
        <end position="161"/>
    </location>
</feature>
<feature type="binding site" evidence="2">
    <location>
        <begin position="228"/>
        <end position="235"/>
    </location>
    <ligand>
        <name>ATP</name>
        <dbReference type="ChEBI" id="CHEBI:30616"/>
    </ligand>
</feature>